<organism>
    <name type="scientific">Arabidopsis thaliana</name>
    <name type="common">Mouse-ear cress</name>
    <dbReference type="NCBI Taxonomy" id="3702"/>
    <lineage>
        <taxon>Eukaryota</taxon>
        <taxon>Viridiplantae</taxon>
        <taxon>Streptophyta</taxon>
        <taxon>Embryophyta</taxon>
        <taxon>Tracheophyta</taxon>
        <taxon>Spermatophyta</taxon>
        <taxon>Magnoliopsida</taxon>
        <taxon>eudicotyledons</taxon>
        <taxon>Gunneridae</taxon>
        <taxon>Pentapetalae</taxon>
        <taxon>rosids</taxon>
        <taxon>malvids</taxon>
        <taxon>Brassicales</taxon>
        <taxon>Brassicaceae</taxon>
        <taxon>Camelineae</taxon>
        <taxon>Arabidopsis</taxon>
    </lineage>
</organism>
<feature type="chain" id="PRO_0000429289" description="MATH domain and coiled-coil domain-containing protein At3g29580">
    <location>
        <begin position="1"/>
        <end position="306"/>
    </location>
</feature>
<feature type="domain" description="MATH" evidence="2">
    <location>
        <begin position="6"/>
        <end position="132"/>
    </location>
</feature>
<feature type="coiled-coil region" evidence="1">
    <location>
        <begin position="253"/>
        <end position="298"/>
    </location>
</feature>
<dbReference type="EMBL" id="AP000606">
    <property type="protein sequence ID" value="BAB01190.1"/>
    <property type="molecule type" value="Genomic_DNA"/>
</dbReference>
<dbReference type="EMBL" id="CP002686">
    <property type="protein sequence ID" value="AEE77591.1"/>
    <property type="molecule type" value="Genomic_DNA"/>
</dbReference>
<dbReference type="RefSeq" id="NP_189599.1">
    <property type="nucleotide sequence ID" value="NM_113879.1"/>
</dbReference>
<dbReference type="SMR" id="Q9LJB5"/>
<dbReference type="FunCoup" id="Q9LJB5">
    <property type="interactions" value="23"/>
</dbReference>
<dbReference type="STRING" id="3702.Q9LJB5"/>
<dbReference type="PaxDb" id="3702-AT3G29580.1"/>
<dbReference type="ProteomicsDB" id="238282"/>
<dbReference type="DNASU" id="822622"/>
<dbReference type="EnsemblPlants" id="AT3G29580.1">
    <property type="protein sequence ID" value="AT3G29580.1"/>
    <property type="gene ID" value="AT3G29580"/>
</dbReference>
<dbReference type="GeneID" id="822622"/>
<dbReference type="Gramene" id="AT3G29580.1">
    <property type="protein sequence ID" value="AT3G29580.1"/>
    <property type="gene ID" value="AT3G29580"/>
</dbReference>
<dbReference type="KEGG" id="ath:AT3G29580"/>
<dbReference type="Araport" id="AT3G29580"/>
<dbReference type="TAIR" id="AT3G29580"/>
<dbReference type="eggNOG" id="KOG1987">
    <property type="taxonomic scope" value="Eukaryota"/>
</dbReference>
<dbReference type="HOGENOM" id="CLU_026537_0_0_1"/>
<dbReference type="InParanoid" id="Q9LJB5"/>
<dbReference type="OMA" id="IETMFDQ"/>
<dbReference type="PhylomeDB" id="Q9LJB5"/>
<dbReference type="PRO" id="PR:Q9LJB5"/>
<dbReference type="Proteomes" id="UP000006548">
    <property type="component" value="Chromosome 3"/>
</dbReference>
<dbReference type="ExpressionAtlas" id="Q9LJB5">
    <property type="expression patterns" value="baseline"/>
</dbReference>
<dbReference type="CDD" id="cd00121">
    <property type="entry name" value="MATH"/>
    <property type="match status" value="1"/>
</dbReference>
<dbReference type="Gene3D" id="2.60.210.10">
    <property type="entry name" value="Apoptosis, Tumor Necrosis Factor Receptor Associated Protein 2, Chain A"/>
    <property type="match status" value="1"/>
</dbReference>
<dbReference type="InterPro" id="IPR050804">
    <property type="entry name" value="MATH-CC_domain_protein"/>
</dbReference>
<dbReference type="InterPro" id="IPR002083">
    <property type="entry name" value="MATH/TRAF_dom"/>
</dbReference>
<dbReference type="InterPro" id="IPR007942">
    <property type="entry name" value="PLipase-like"/>
</dbReference>
<dbReference type="InterPro" id="IPR008974">
    <property type="entry name" value="TRAF-like"/>
</dbReference>
<dbReference type="PANTHER" id="PTHR46236">
    <property type="entry name" value="TRAF-LIKE SUPERFAMILY PROTEIN"/>
    <property type="match status" value="1"/>
</dbReference>
<dbReference type="PANTHER" id="PTHR46236:SF11">
    <property type="entry name" value="TRAF-LIKE SUPERFAMILY PROTEIN"/>
    <property type="match status" value="1"/>
</dbReference>
<dbReference type="Pfam" id="PF22486">
    <property type="entry name" value="MATH_2"/>
    <property type="match status" value="1"/>
</dbReference>
<dbReference type="Pfam" id="PF05278">
    <property type="entry name" value="PEARLI-4"/>
    <property type="match status" value="1"/>
</dbReference>
<dbReference type="SUPFAM" id="SSF49599">
    <property type="entry name" value="TRAF domain-like"/>
    <property type="match status" value="1"/>
</dbReference>
<dbReference type="PROSITE" id="PS50144">
    <property type="entry name" value="MATH"/>
    <property type="match status" value="1"/>
</dbReference>
<name>MCC12_ARATH</name>
<sequence>MGNLDDNKFTWVIKNVPTLNSDMLFSNYFVIGGCSWRVVAHSKENNFKESLSLTLIVAEDSAQKMGCGWSRYAKIIFTLVNQISEILSQRIETMFDQKSSVFSSETMFSIGKFDEHFAGFIVNGEIKIVVEFLEIIDKLVLSKESNPPFKKTKLNNDGEVSKDLIREVPVIMESIVVNGFHVLPSQVEFVKRIFEKHPDVAKEFRPTNRIVKTAYMNVLLSLIETLRQSPREISKNDLDGACGLLRSMKEAGFKLDWLEKKLNEVLEKKEKEESYETRMREIEEEMKDLKAKALDVGAPLRLDDVV</sequence>
<evidence type="ECO:0000255" key="1"/>
<evidence type="ECO:0000255" key="2">
    <source>
        <dbReference type="PROSITE-ProRule" id="PRU00129"/>
    </source>
</evidence>
<proteinExistence type="predicted"/>
<reference key="1">
    <citation type="journal article" date="2000" name="DNA Res.">
        <title>Structural analysis of Arabidopsis thaliana chromosome 3. II. Sequence features of the 4,251,695 bp regions covered by 90 P1, TAC and BAC clones.</title>
        <authorList>
            <person name="Kaneko T."/>
            <person name="Katoh T."/>
            <person name="Sato S."/>
            <person name="Nakamura Y."/>
            <person name="Asamizu E."/>
            <person name="Tabata S."/>
        </authorList>
    </citation>
    <scope>NUCLEOTIDE SEQUENCE [LARGE SCALE GENOMIC DNA]</scope>
    <source>
        <strain>cv. Columbia</strain>
    </source>
</reference>
<reference key="2">
    <citation type="journal article" date="2017" name="Plant J.">
        <title>Araport11: a complete reannotation of the Arabidopsis thaliana reference genome.</title>
        <authorList>
            <person name="Cheng C.Y."/>
            <person name="Krishnakumar V."/>
            <person name="Chan A.P."/>
            <person name="Thibaud-Nissen F."/>
            <person name="Schobel S."/>
            <person name="Town C.D."/>
        </authorList>
    </citation>
    <scope>GENOME REANNOTATION</scope>
    <source>
        <strain>cv. Columbia</strain>
    </source>
</reference>
<reference key="3">
    <citation type="journal article" date="2010" name="Plant Physiol.">
        <title>RTM3, which controls long-distance movement of potyviruses, is a member of a new plant gene family encoding a meprin and TRAF homology domain-containing protein.</title>
        <authorList>
            <person name="Cosson P."/>
            <person name="Sofer L."/>
            <person name="Le Q.H."/>
            <person name="Leger V."/>
            <person name="Schurdi-Levraud V."/>
            <person name="Whitham S.A."/>
            <person name="Yamamoto M.L."/>
            <person name="Gopalan S."/>
            <person name="Le Gall O."/>
            <person name="Candresse T."/>
            <person name="Carrington J.C."/>
            <person name="Revers F."/>
        </authorList>
    </citation>
    <scope>GENE FAMILY</scope>
</reference>
<gene>
    <name type="ordered locus">At3g29580</name>
    <name type="ORF">MTO24.3</name>
</gene>
<accession>Q9LJB5</accession>
<keyword id="KW-0175">Coiled coil</keyword>
<keyword id="KW-1185">Reference proteome</keyword>
<protein>
    <recommendedName>
        <fullName>MATH domain and coiled-coil domain-containing protein At3g29580</fullName>
    </recommendedName>
    <alternativeName>
        <fullName>RTM3-like protein At3g29580</fullName>
    </alternativeName>
</protein>